<proteinExistence type="inferred from homology"/>
<protein>
    <recommendedName>
        <fullName evidence="1">Trigger factor</fullName>
        <shortName evidence="1">TF</shortName>
        <ecNumber evidence="1">5.2.1.8</ecNumber>
    </recommendedName>
    <alternativeName>
        <fullName evidence="1">PPIase</fullName>
    </alternativeName>
</protein>
<comment type="function">
    <text evidence="1">Involved in protein export. Acts as a chaperone by maintaining the newly synthesized protein in an open conformation. Functions as a peptidyl-prolyl cis-trans isomerase.</text>
</comment>
<comment type="catalytic activity">
    <reaction evidence="1">
        <text>[protein]-peptidylproline (omega=180) = [protein]-peptidylproline (omega=0)</text>
        <dbReference type="Rhea" id="RHEA:16237"/>
        <dbReference type="Rhea" id="RHEA-COMP:10747"/>
        <dbReference type="Rhea" id="RHEA-COMP:10748"/>
        <dbReference type="ChEBI" id="CHEBI:83833"/>
        <dbReference type="ChEBI" id="CHEBI:83834"/>
        <dbReference type="EC" id="5.2.1.8"/>
    </reaction>
</comment>
<comment type="subcellular location">
    <subcellularLocation>
        <location>Cytoplasm</location>
    </subcellularLocation>
    <text evidence="1">About half TF is bound to the ribosome near the polypeptide exit tunnel while the other half is free in the cytoplasm.</text>
</comment>
<comment type="domain">
    <text evidence="1">Consists of 3 domains; the N-terminus binds the ribosome, the middle domain has PPIase activity, while the C-terminus has intrinsic chaperone activity on its own.</text>
</comment>
<comment type="similarity">
    <text evidence="1">Belongs to the FKBP-type PPIase family. Tig subfamily.</text>
</comment>
<dbReference type="EC" id="5.2.1.8" evidence="1"/>
<dbReference type="EMBL" id="AM180355">
    <property type="protein sequence ID" value="CAJ70203.1"/>
    <property type="molecule type" value="Genomic_DNA"/>
</dbReference>
<dbReference type="RefSeq" id="WP_003417090.1">
    <property type="nucleotide sequence ID" value="NZ_JAUPES010000002.1"/>
</dbReference>
<dbReference type="RefSeq" id="YP_001089822.1">
    <property type="nucleotide sequence ID" value="NC_009089.1"/>
</dbReference>
<dbReference type="SMR" id="Q180E9"/>
<dbReference type="STRING" id="272563.CD630_33060"/>
<dbReference type="EnsemblBacteria" id="CAJ70203">
    <property type="protein sequence ID" value="CAJ70203"/>
    <property type="gene ID" value="CD630_33060"/>
</dbReference>
<dbReference type="GeneID" id="66355800"/>
<dbReference type="KEGG" id="cdf:CD630_33060"/>
<dbReference type="KEGG" id="pdc:CDIF630_03607"/>
<dbReference type="PATRIC" id="fig|272563.120.peg.3491"/>
<dbReference type="eggNOG" id="COG0544">
    <property type="taxonomic scope" value="Bacteria"/>
</dbReference>
<dbReference type="OrthoDB" id="9767721at2"/>
<dbReference type="PhylomeDB" id="Q180E9"/>
<dbReference type="BioCyc" id="PDIF272563:G12WB-3473-MONOMER"/>
<dbReference type="Proteomes" id="UP000001978">
    <property type="component" value="Chromosome"/>
</dbReference>
<dbReference type="GO" id="GO:0005737">
    <property type="term" value="C:cytoplasm"/>
    <property type="evidence" value="ECO:0007669"/>
    <property type="project" value="UniProtKB-SubCell"/>
</dbReference>
<dbReference type="GO" id="GO:0003755">
    <property type="term" value="F:peptidyl-prolyl cis-trans isomerase activity"/>
    <property type="evidence" value="ECO:0007669"/>
    <property type="project" value="UniProtKB-UniRule"/>
</dbReference>
<dbReference type="GO" id="GO:0044183">
    <property type="term" value="F:protein folding chaperone"/>
    <property type="evidence" value="ECO:0007669"/>
    <property type="project" value="TreeGrafter"/>
</dbReference>
<dbReference type="GO" id="GO:0043022">
    <property type="term" value="F:ribosome binding"/>
    <property type="evidence" value="ECO:0007669"/>
    <property type="project" value="TreeGrafter"/>
</dbReference>
<dbReference type="GO" id="GO:0051083">
    <property type="term" value="P:'de novo' cotranslational protein folding"/>
    <property type="evidence" value="ECO:0007669"/>
    <property type="project" value="TreeGrafter"/>
</dbReference>
<dbReference type="GO" id="GO:0051301">
    <property type="term" value="P:cell division"/>
    <property type="evidence" value="ECO:0007669"/>
    <property type="project" value="UniProtKB-KW"/>
</dbReference>
<dbReference type="GO" id="GO:0061077">
    <property type="term" value="P:chaperone-mediated protein folding"/>
    <property type="evidence" value="ECO:0007669"/>
    <property type="project" value="TreeGrafter"/>
</dbReference>
<dbReference type="GO" id="GO:0015031">
    <property type="term" value="P:protein transport"/>
    <property type="evidence" value="ECO:0007669"/>
    <property type="project" value="UniProtKB-UniRule"/>
</dbReference>
<dbReference type="GO" id="GO:0043335">
    <property type="term" value="P:protein unfolding"/>
    <property type="evidence" value="ECO:0007669"/>
    <property type="project" value="TreeGrafter"/>
</dbReference>
<dbReference type="FunFam" id="3.10.50.40:FF:000001">
    <property type="entry name" value="Trigger factor"/>
    <property type="match status" value="1"/>
</dbReference>
<dbReference type="Gene3D" id="3.10.50.40">
    <property type="match status" value="1"/>
</dbReference>
<dbReference type="Gene3D" id="3.30.70.1050">
    <property type="entry name" value="Trigger factor ribosome-binding domain"/>
    <property type="match status" value="1"/>
</dbReference>
<dbReference type="Gene3D" id="1.10.3120.10">
    <property type="entry name" value="Trigger factor, C-terminal domain"/>
    <property type="match status" value="1"/>
</dbReference>
<dbReference type="HAMAP" id="MF_00303">
    <property type="entry name" value="Trigger_factor_Tig"/>
    <property type="match status" value="1"/>
</dbReference>
<dbReference type="InterPro" id="IPR046357">
    <property type="entry name" value="PPIase_dom_sf"/>
</dbReference>
<dbReference type="InterPro" id="IPR001179">
    <property type="entry name" value="PPIase_FKBP_dom"/>
</dbReference>
<dbReference type="InterPro" id="IPR005215">
    <property type="entry name" value="Trig_fac"/>
</dbReference>
<dbReference type="InterPro" id="IPR008880">
    <property type="entry name" value="Trigger_fac_C"/>
</dbReference>
<dbReference type="InterPro" id="IPR037041">
    <property type="entry name" value="Trigger_fac_C_sf"/>
</dbReference>
<dbReference type="InterPro" id="IPR008881">
    <property type="entry name" value="Trigger_fac_ribosome-bd_bac"/>
</dbReference>
<dbReference type="InterPro" id="IPR036611">
    <property type="entry name" value="Trigger_fac_ribosome-bd_sf"/>
</dbReference>
<dbReference type="InterPro" id="IPR027304">
    <property type="entry name" value="Trigger_fact/SurA_dom_sf"/>
</dbReference>
<dbReference type="NCBIfam" id="TIGR00115">
    <property type="entry name" value="tig"/>
    <property type="match status" value="1"/>
</dbReference>
<dbReference type="PANTHER" id="PTHR30560">
    <property type="entry name" value="TRIGGER FACTOR CHAPERONE AND PEPTIDYL-PROLYL CIS/TRANS ISOMERASE"/>
    <property type="match status" value="1"/>
</dbReference>
<dbReference type="PANTHER" id="PTHR30560:SF3">
    <property type="entry name" value="TRIGGER FACTOR-LIKE PROTEIN TIG, CHLOROPLASTIC"/>
    <property type="match status" value="1"/>
</dbReference>
<dbReference type="Pfam" id="PF00254">
    <property type="entry name" value="FKBP_C"/>
    <property type="match status" value="1"/>
</dbReference>
<dbReference type="Pfam" id="PF05698">
    <property type="entry name" value="Trigger_C"/>
    <property type="match status" value="1"/>
</dbReference>
<dbReference type="Pfam" id="PF05697">
    <property type="entry name" value="Trigger_N"/>
    <property type="match status" value="1"/>
</dbReference>
<dbReference type="PIRSF" id="PIRSF003095">
    <property type="entry name" value="Trigger_factor"/>
    <property type="match status" value="1"/>
</dbReference>
<dbReference type="SUPFAM" id="SSF54534">
    <property type="entry name" value="FKBP-like"/>
    <property type="match status" value="1"/>
</dbReference>
<dbReference type="SUPFAM" id="SSF109998">
    <property type="entry name" value="Triger factor/SurA peptide-binding domain-like"/>
    <property type="match status" value="1"/>
</dbReference>
<dbReference type="SUPFAM" id="SSF102735">
    <property type="entry name" value="Trigger factor ribosome-binding domain"/>
    <property type="match status" value="1"/>
</dbReference>
<dbReference type="PROSITE" id="PS50059">
    <property type="entry name" value="FKBP_PPIASE"/>
    <property type="match status" value="1"/>
</dbReference>
<gene>
    <name evidence="1" type="primary">tig</name>
    <name type="ordered locus">CD630_33060</name>
</gene>
<name>TIG_CLOD6</name>
<reference key="1">
    <citation type="journal article" date="2006" name="Nat. Genet.">
        <title>The multidrug-resistant human pathogen Clostridium difficile has a highly mobile, mosaic genome.</title>
        <authorList>
            <person name="Sebaihia M."/>
            <person name="Wren B.W."/>
            <person name="Mullany P."/>
            <person name="Fairweather N.F."/>
            <person name="Minton N."/>
            <person name="Stabler R."/>
            <person name="Thomson N.R."/>
            <person name="Roberts A.P."/>
            <person name="Cerdeno-Tarraga A.M."/>
            <person name="Wang H."/>
            <person name="Holden M.T.G."/>
            <person name="Wright A."/>
            <person name="Churcher C."/>
            <person name="Quail M.A."/>
            <person name="Baker S."/>
            <person name="Bason N."/>
            <person name="Brooks K."/>
            <person name="Chillingworth T."/>
            <person name="Cronin A."/>
            <person name="Davis P."/>
            <person name="Dowd L."/>
            <person name="Fraser A."/>
            <person name="Feltwell T."/>
            <person name="Hance Z."/>
            <person name="Holroyd S."/>
            <person name="Jagels K."/>
            <person name="Moule S."/>
            <person name="Mungall K."/>
            <person name="Price C."/>
            <person name="Rabbinowitsch E."/>
            <person name="Sharp S."/>
            <person name="Simmonds M."/>
            <person name="Stevens K."/>
            <person name="Unwin L."/>
            <person name="Whithead S."/>
            <person name="Dupuy B."/>
            <person name="Dougan G."/>
            <person name="Barrell B."/>
            <person name="Parkhill J."/>
        </authorList>
    </citation>
    <scope>NUCLEOTIDE SEQUENCE [LARGE SCALE GENOMIC DNA]</scope>
    <source>
        <strain>630</strain>
    </source>
</reference>
<sequence>MKAELIKKEGNKVTLKITVDNNKFEAAVNKAYNKSRNKYNIPGFRKGKAPRIVIETQYGKGIFYNDAIEILFPEVYPEAIKELDIDPIDNPDLDIEEISKDNGLVMVLNVEVKPEFELGNYKGIEIAKVENTVSDENVDAKLQEMVEKNARLVSVEDKALEDGDTAIIDFEGFENGVAFDGGKGENYNLVIGSNTFIPGFEEQLVGKKAGEEVEVNVTFPEEYHSQDLAGKPVVFNVKINDVKVKELSALDDEFAKDTSEFDSLDELKADVRAKLEEEAKNRADAETRNSVVEKVAENTEIEIPEVMIQHQIDNMLNELNYQLQYQGFGLQQLLEMTGRTMEELREERKEDAKKLVKSSLVLEAITKAEGIEATEEEFKAELEKMASAYNMEVEKIEASLRDADKEDIKGQIKIRKTIDLLVDNATIA</sequence>
<organism>
    <name type="scientific">Clostridioides difficile (strain 630)</name>
    <name type="common">Peptoclostridium difficile</name>
    <dbReference type="NCBI Taxonomy" id="272563"/>
    <lineage>
        <taxon>Bacteria</taxon>
        <taxon>Bacillati</taxon>
        <taxon>Bacillota</taxon>
        <taxon>Clostridia</taxon>
        <taxon>Peptostreptococcales</taxon>
        <taxon>Peptostreptococcaceae</taxon>
        <taxon>Clostridioides</taxon>
    </lineage>
</organism>
<feature type="chain" id="PRO_0000256544" description="Trigger factor">
    <location>
        <begin position="1"/>
        <end position="428"/>
    </location>
</feature>
<feature type="domain" description="PPIase FKBP-type" evidence="1">
    <location>
        <begin position="163"/>
        <end position="248"/>
    </location>
</feature>
<keyword id="KW-0131">Cell cycle</keyword>
<keyword id="KW-0132">Cell division</keyword>
<keyword id="KW-0143">Chaperone</keyword>
<keyword id="KW-0963">Cytoplasm</keyword>
<keyword id="KW-0413">Isomerase</keyword>
<keyword id="KW-1185">Reference proteome</keyword>
<keyword id="KW-0697">Rotamase</keyword>
<evidence type="ECO:0000255" key="1">
    <source>
        <dbReference type="HAMAP-Rule" id="MF_00303"/>
    </source>
</evidence>
<accession>Q180E9</accession>